<reference key="1">
    <citation type="journal article" date="2009" name="Genome Biol.">
        <title>Genomic and genetic analyses of diversity and plant interactions of Pseudomonas fluorescens.</title>
        <authorList>
            <person name="Silby M.W."/>
            <person name="Cerdeno-Tarraga A.M."/>
            <person name="Vernikos G.S."/>
            <person name="Giddens S.R."/>
            <person name="Jackson R.W."/>
            <person name="Preston G.M."/>
            <person name="Zhang X.-X."/>
            <person name="Moon C.D."/>
            <person name="Gehrig S.M."/>
            <person name="Godfrey S.A.C."/>
            <person name="Knight C.G."/>
            <person name="Malone J.G."/>
            <person name="Robinson Z."/>
            <person name="Spiers A.J."/>
            <person name="Harris S."/>
            <person name="Challis G.L."/>
            <person name="Yaxley A.M."/>
            <person name="Harris D."/>
            <person name="Seeger K."/>
            <person name="Murphy L."/>
            <person name="Rutter S."/>
            <person name="Squares R."/>
            <person name="Quail M.A."/>
            <person name="Saunders E."/>
            <person name="Mavromatis K."/>
            <person name="Brettin T.S."/>
            <person name="Bentley S.D."/>
            <person name="Hothersall J."/>
            <person name="Stephens E."/>
            <person name="Thomas C.M."/>
            <person name="Parkhill J."/>
            <person name="Levy S.B."/>
            <person name="Rainey P.B."/>
            <person name="Thomson N.R."/>
        </authorList>
    </citation>
    <scope>NUCLEOTIDE SEQUENCE [LARGE SCALE GENOMIC DNA]</scope>
    <source>
        <strain>SBW25</strain>
    </source>
</reference>
<dbReference type="EC" id="5.4.99.62" evidence="1"/>
<dbReference type="EMBL" id="AM181176">
    <property type="protein sequence ID" value="CAY50656.1"/>
    <property type="molecule type" value="Genomic_DNA"/>
</dbReference>
<dbReference type="RefSeq" id="WP_015884940.1">
    <property type="nucleotide sequence ID" value="NC_012660.1"/>
</dbReference>
<dbReference type="SMR" id="C3JZP4"/>
<dbReference type="STRING" id="294.SRM1_02082"/>
<dbReference type="PATRIC" id="fig|216595.4.peg.4300"/>
<dbReference type="eggNOG" id="COG1869">
    <property type="taxonomic scope" value="Bacteria"/>
</dbReference>
<dbReference type="HOGENOM" id="CLU_135498_0_0_6"/>
<dbReference type="OrthoDB" id="9805009at2"/>
<dbReference type="UniPathway" id="UPA00916">
    <property type="reaction ID" value="UER00888"/>
</dbReference>
<dbReference type="GO" id="GO:0005829">
    <property type="term" value="C:cytosol"/>
    <property type="evidence" value="ECO:0007669"/>
    <property type="project" value="TreeGrafter"/>
</dbReference>
<dbReference type="GO" id="GO:0062193">
    <property type="term" value="F:D-ribose pyranase activity"/>
    <property type="evidence" value="ECO:0007669"/>
    <property type="project" value="UniProtKB-EC"/>
</dbReference>
<dbReference type="GO" id="GO:0016872">
    <property type="term" value="F:intramolecular lyase activity"/>
    <property type="evidence" value="ECO:0007669"/>
    <property type="project" value="UniProtKB-UniRule"/>
</dbReference>
<dbReference type="GO" id="GO:0048029">
    <property type="term" value="F:monosaccharide binding"/>
    <property type="evidence" value="ECO:0007669"/>
    <property type="project" value="InterPro"/>
</dbReference>
<dbReference type="GO" id="GO:0019303">
    <property type="term" value="P:D-ribose catabolic process"/>
    <property type="evidence" value="ECO:0007669"/>
    <property type="project" value="UniProtKB-UniRule"/>
</dbReference>
<dbReference type="FunFam" id="3.40.1650.10:FF:000004">
    <property type="entry name" value="D-ribose pyranase"/>
    <property type="match status" value="1"/>
</dbReference>
<dbReference type="Gene3D" id="3.40.1650.10">
    <property type="entry name" value="RbsD-like domain"/>
    <property type="match status" value="1"/>
</dbReference>
<dbReference type="HAMAP" id="MF_01661">
    <property type="entry name" value="D_rib_pyranase"/>
    <property type="match status" value="1"/>
</dbReference>
<dbReference type="InterPro" id="IPR023064">
    <property type="entry name" value="D-ribose_pyranase"/>
</dbReference>
<dbReference type="InterPro" id="IPR023750">
    <property type="entry name" value="RbsD-like_sf"/>
</dbReference>
<dbReference type="InterPro" id="IPR007721">
    <property type="entry name" value="RbsD_FucU"/>
</dbReference>
<dbReference type="NCBIfam" id="NF008761">
    <property type="entry name" value="PRK11797.1"/>
    <property type="match status" value="1"/>
</dbReference>
<dbReference type="PANTHER" id="PTHR37831">
    <property type="entry name" value="D-RIBOSE PYRANASE"/>
    <property type="match status" value="1"/>
</dbReference>
<dbReference type="PANTHER" id="PTHR37831:SF1">
    <property type="entry name" value="D-RIBOSE PYRANASE"/>
    <property type="match status" value="1"/>
</dbReference>
<dbReference type="Pfam" id="PF05025">
    <property type="entry name" value="RbsD_FucU"/>
    <property type="match status" value="1"/>
</dbReference>
<dbReference type="SUPFAM" id="SSF102546">
    <property type="entry name" value="RbsD-like"/>
    <property type="match status" value="1"/>
</dbReference>
<organism>
    <name type="scientific">Pseudomonas fluorescens (strain SBW25)</name>
    <dbReference type="NCBI Taxonomy" id="216595"/>
    <lineage>
        <taxon>Bacteria</taxon>
        <taxon>Pseudomonadati</taxon>
        <taxon>Pseudomonadota</taxon>
        <taxon>Gammaproteobacteria</taxon>
        <taxon>Pseudomonadales</taxon>
        <taxon>Pseudomonadaceae</taxon>
        <taxon>Pseudomonas</taxon>
    </lineage>
</organism>
<gene>
    <name evidence="1" type="primary">rbsD</name>
    <name type="ordered locus">PFLU_4155</name>
</gene>
<sequence length="134" mass="14402">MKKTPLLNIALSRVIASLGHGDILVIGDAGLPVPPGVELIDLALTQGIPDFISALRIVLSEMQVESHVLAEEILLKQPPALNELNTLSDEAALGERRLVSHEAFKQLSRKARAVVRTGECQPYCNIALVSGVTF</sequence>
<accession>C3JZP4</accession>
<proteinExistence type="inferred from homology"/>
<feature type="chain" id="PRO_1000215869" description="D-ribose pyranase">
    <location>
        <begin position="1"/>
        <end position="134"/>
    </location>
</feature>
<feature type="active site" description="Proton donor" evidence="1">
    <location>
        <position position="20"/>
    </location>
</feature>
<feature type="binding site" evidence="1">
    <location>
        <position position="28"/>
    </location>
    <ligand>
        <name>substrate</name>
    </ligand>
</feature>
<feature type="binding site" evidence="1">
    <location>
        <position position="101"/>
    </location>
    <ligand>
        <name>substrate</name>
    </ligand>
</feature>
<feature type="binding site" evidence="1">
    <location>
        <begin position="123"/>
        <end position="125"/>
    </location>
    <ligand>
        <name>substrate</name>
    </ligand>
</feature>
<evidence type="ECO:0000255" key="1">
    <source>
        <dbReference type="HAMAP-Rule" id="MF_01661"/>
    </source>
</evidence>
<keyword id="KW-0119">Carbohydrate metabolism</keyword>
<keyword id="KW-0963">Cytoplasm</keyword>
<keyword id="KW-0413">Isomerase</keyword>
<comment type="function">
    <text evidence="1">Catalyzes the interconversion of beta-pyran and beta-furan forms of D-ribose.</text>
</comment>
<comment type="catalytic activity">
    <reaction evidence="1">
        <text>beta-D-ribopyranose = beta-D-ribofuranose</text>
        <dbReference type="Rhea" id="RHEA:25432"/>
        <dbReference type="ChEBI" id="CHEBI:27476"/>
        <dbReference type="ChEBI" id="CHEBI:47002"/>
        <dbReference type="EC" id="5.4.99.62"/>
    </reaction>
</comment>
<comment type="pathway">
    <text evidence="1">Carbohydrate metabolism; D-ribose degradation; D-ribose 5-phosphate from beta-D-ribopyranose: step 1/2.</text>
</comment>
<comment type="subunit">
    <text evidence="1">Homodecamer.</text>
</comment>
<comment type="subcellular location">
    <subcellularLocation>
        <location evidence="1">Cytoplasm</location>
    </subcellularLocation>
</comment>
<comment type="similarity">
    <text evidence="1">Belongs to the RbsD / FucU family. RbsD subfamily.</text>
</comment>
<name>RBSD_PSEFS</name>
<protein>
    <recommendedName>
        <fullName evidence="1">D-ribose pyranase</fullName>
        <ecNumber evidence="1">5.4.99.62</ecNumber>
    </recommendedName>
</protein>